<accession>C5D5L1</accession>
<organism>
    <name type="scientific">Geobacillus sp. (strain WCH70)</name>
    <dbReference type="NCBI Taxonomy" id="471223"/>
    <lineage>
        <taxon>Bacteria</taxon>
        <taxon>Bacillati</taxon>
        <taxon>Bacillota</taxon>
        <taxon>Bacilli</taxon>
        <taxon>Bacillales</taxon>
        <taxon>Anoxybacillaceae</taxon>
        <taxon>Geobacillus</taxon>
    </lineage>
</organism>
<proteinExistence type="inferred from homology"/>
<evidence type="ECO:0000255" key="1">
    <source>
        <dbReference type="HAMAP-Rule" id="MF_00321"/>
    </source>
</evidence>
<name>ENGB_GEOSW</name>
<keyword id="KW-0131">Cell cycle</keyword>
<keyword id="KW-0132">Cell division</keyword>
<keyword id="KW-0342">GTP-binding</keyword>
<keyword id="KW-0460">Magnesium</keyword>
<keyword id="KW-0479">Metal-binding</keyword>
<keyword id="KW-0547">Nucleotide-binding</keyword>
<keyword id="KW-0717">Septation</keyword>
<dbReference type="EMBL" id="CP001638">
    <property type="protein sequence ID" value="ACS25279.1"/>
    <property type="molecule type" value="Genomic_DNA"/>
</dbReference>
<dbReference type="SMR" id="C5D5L1"/>
<dbReference type="STRING" id="471223.GWCH70_2584"/>
<dbReference type="KEGG" id="gwc:GWCH70_2584"/>
<dbReference type="eggNOG" id="COG0218">
    <property type="taxonomic scope" value="Bacteria"/>
</dbReference>
<dbReference type="HOGENOM" id="CLU_033732_3_0_9"/>
<dbReference type="OrthoDB" id="9804921at2"/>
<dbReference type="GO" id="GO:0005829">
    <property type="term" value="C:cytosol"/>
    <property type="evidence" value="ECO:0007669"/>
    <property type="project" value="TreeGrafter"/>
</dbReference>
<dbReference type="GO" id="GO:0005525">
    <property type="term" value="F:GTP binding"/>
    <property type="evidence" value="ECO:0007669"/>
    <property type="project" value="UniProtKB-UniRule"/>
</dbReference>
<dbReference type="GO" id="GO:0046872">
    <property type="term" value="F:metal ion binding"/>
    <property type="evidence" value="ECO:0007669"/>
    <property type="project" value="UniProtKB-KW"/>
</dbReference>
<dbReference type="GO" id="GO:0000917">
    <property type="term" value="P:division septum assembly"/>
    <property type="evidence" value="ECO:0007669"/>
    <property type="project" value="UniProtKB-KW"/>
</dbReference>
<dbReference type="CDD" id="cd01876">
    <property type="entry name" value="YihA_EngB"/>
    <property type="match status" value="1"/>
</dbReference>
<dbReference type="FunFam" id="3.40.50.300:FF:000098">
    <property type="entry name" value="Probable GTP-binding protein EngB"/>
    <property type="match status" value="1"/>
</dbReference>
<dbReference type="Gene3D" id="3.40.50.300">
    <property type="entry name" value="P-loop containing nucleotide triphosphate hydrolases"/>
    <property type="match status" value="1"/>
</dbReference>
<dbReference type="HAMAP" id="MF_00321">
    <property type="entry name" value="GTPase_EngB"/>
    <property type="match status" value="1"/>
</dbReference>
<dbReference type="InterPro" id="IPR030393">
    <property type="entry name" value="G_ENGB_dom"/>
</dbReference>
<dbReference type="InterPro" id="IPR006073">
    <property type="entry name" value="GTP-bd"/>
</dbReference>
<dbReference type="InterPro" id="IPR019987">
    <property type="entry name" value="GTP-bd_ribosome_bio_YsxC"/>
</dbReference>
<dbReference type="InterPro" id="IPR027417">
    <property type="entry name" value="P-loop_NTPase"/>
</dbReference>
<dbReference type="InterPro" id="IPR005225">
    <property type="entry name" value="Small_GTP-bd"/>
</dbReference>
<dbReference type="NCBIfam" id="TIGR03598">
    <property type="entry name" value="GTPase_YsxC"/>
    <property type="match status" value="1"/>
</dbReference>
<dbReference type="NCBIfam" id="TIGR00231">
    <property type="entry name" value="small_GTP"/>
    <property type="match status" value="1"/>
</dbReference>
<dbReference type="PANTHER" id="PTHR11649:SF13">
    <property type="entry name" value="ENGB-TYPE G DOMAIN-CONTAINING PROTEIN"/>
    <property type="match status" value="1"/>
</dbReference>
<dbReference type="PANTHER" id="PTHR11649">
    <property type="entry name" value="MSS1/TRME-RELATED GTP-BINDING PROTEIN"/>
    <property type="match status" value="1"/>
</dbReference>
<dbReference type="Pfam" id="PF01926">
    <property type="entry name" value="MMR_HSR1"/>
    <property type="match status" value="1"/>
</dbReference>
<dbReference type="SUPFAM" id="SSF52540">
    <property type="entry name" value="P-loop containing nucleoside triphosphate hydrolases"/>
    <property type="match status" value="1"/>
</dbReference>
<dbReference type="PROSITE" id="PS51706">
    <property type="entry name" value="G_ENGB"/>
    <property type="match status" value="1"/>
</dbReference>
<protein>
    <recommendedName>
        <fullName evidence="1">Probable GTP-binding protein EngB</fullName>
    </recommendedName>
</protein>
<gene>
    <name evidence="1" type="primary">engB</name>
    <name type="ordered locus">GWCH70_2584</name>
</gene>
<feature type="chain" id="PRO_1000205130" description="Probable GTP-binding protein EngB">
    <location>
        <begin position="1"/>
        <end position="193"/>
    </location>
</feature>
<feature type="domain" description="EngB-type G" evidence="1">
    <location>
        <begin position="22"/>
        <end position="193"/>
    </location>
</feature>
<feature type="binding site" evidence="1">
    <location>
        <begin position="30"/>
        <end position="37"/>
    </location>
    <ligand>
        <name>GTP</name>
        <dbReference type="ChEBI" id="CHEBI:37565"/>
    </ligand>
</feature>
<feature type="binding site" evidence="1">
    <location>
        <position position="37"/>
    </location>
    <ligand>
        <name>Mg(2+)</name>
        <dbReference type="ChEBI" id="CHEBI:18420"/>
    </ligand>
</feature>
<feature type="binding site" evidence="1">
    <location>
        <begin position="57"/>
        <end position="61"/>
    </location>
    <ligand>
        <name>GTP</name>
        <dbReference type="ChEBI" id="CHEBI:37565"/>
    </ligand>
</feature>
<feature type="binding site" evidence="1">
    <location>
        <position position="59"/>
    </location>
    <ligand>
        <name>Mg(2+)</name>
        <dbReference type="ChEBI" id="CHEBI:18420"/>
    </ligand>
</feature>
<feature type="binding site" evidence="1">
    <location>
        <begin position="75"/>
        <end position="78"/>
    </location>
    <ligand>
        <name>GTP</name>
        <dbReference type="ChEBI" id="CHEBI:37565"/>
    </ligand>
</feature>
<feature type="binding site" evidence="1">
    <location>
        <begin position="142"/>
        <end position="145"/>
    </location>
    <ligand>
        <name>GTP</name>
        <dbReference type="ChEBI" id="CHEBI:37565"/>
    </ligand>
</feature>
<feature type="binding site" evidence="1">
    <location>
        <begin position="174"/>
        <end position="176"/>
    </location>
    <ligand>
        <name>GTP</name>
        <dbReference type="ChEBI" id="CHEBI:37565"/>
    </ligand>
</feature>
<sequence length="193" mass="22076">MNVTKAEIAVSAVKPEQYPDGALPEFALAGRSNVGKSSFINKMINRKNLARTSSKPGKTQTLNFYLINESFYFVDVPGYGFARVSKKEREAWGKMMETYFTTREQLRAVVLIVDLRHPPTKDDVMMYEFLKHYQIPTIIIATKADKVPKGKWQKHLKVVRETLNIIEDDKLILFSAETGQGKEEAWAALERFL</sequence>
<reference key="1">
    <citation type="submission" date="2009-06" db="EMBL/GenBank/DDBJ databases">
        <title>Complete sequence of chromosome of Geopacillus sp. WCH70.</title>
        <authorList>
            <consortium name="US DOE Joint Genome Institute"/>
            <person name="Lucas S."/>
            <person name="Copeland A."/>
            <person name="Lapidus A."/>
            <person name="Glavina del Rio T."/>
            <person name="Dalin E."/>
            <person name="Tice H."/>
            <person name="Bruce D."/>
            <person name="Goodwin L."/>
            <person name="Pitluck S."/>
            <person name="Chertkov O."/>
            <person name="Brettin T."/>
            <person name="Detter J.C."/>
            <person name="Han C."/>
            <person name="Larimer F."/>
            <person name="Land M."/>
            <person name="Hauser L."/>
            <person name="Kyrpides N."/>
            <person name="Mikhailova N."/>
            <person name="Brumm P."/>
            <person name="Mead D.A."/>
            <person name="Richardson P."/>
        </authorList>
    </citation>
    <scope>NUCLEOTIDE SEQUENCE [LARGE SCALE GENOMIC DNA]</scope>
    <source>
        <strain>WCH70</strain>
    </source>
</reference>
<comment type="function">
    <text evidence="1">Necessary for normal cell division and for the maintenance of normal septation.</text>
</comment>
<comment type="cofactor">
    <cofactor evidence="1">
        <name>Mg(2+)</name>
        <dbReference type="ChEBI" id="CHEBI:18420"/>
    </cofactor>
</comment>
<comment type="similarity">
    <text evidence="1">Belongs to the TRAFAC class TrmE-Era-EngA-EngB-Septin-like GTPase superfamily. EngB GTPase family.</text>
</comment>